<dbReference type="EC" id="3.1.-.-" evidence="1"/>
<dbReference type="EMBL" id="AAFW02000151">
    <property type="protein sequence ID" value="EDN60052.1"/>
    <property type="molecule type" value="Genomic_DNA"/>
</dbReference>
<dbReference type="SMR" id="A6ZZK4"/>
<dbReference type="HOGENOM" id="CLU_032444_2_0_1"/>
<dbReference type="Proteomes" id="UP000007060">
    <property type="component" value="Unassembled WGS sequence"/>
</dbReference>
<dbReference type="GO" id="GO:0005739">
    <property type="term" value="C:mitochondrion"/>
    <property type="evidence" value="ECO:0007669"/>
    <property type="project" value="UniProtKB-SubCell"/>
</dbReference>
<dbReference type="GO" id="GO:0005730">
    <property type="term" value="C:nucleolus"/>
    <property type="evidence" value="ECO:0007669"/>
    <property type="project" value="UniProtKB-SubCell"/>
</dbReference>
<dbReference type="GO" id="GO:0005654">
    <property type="term" value="C:nucleoplasm"/>
    <property type="evidence" value="ECO:0007669"/>
    <property type="project" value="UniProtKB-SubCell"/>
</dbReference>
<dbReference type="GO" id="GO:0008409">
    <property type="term" value="F:5'-3' exonuclease activity"/>
    <property type="evidence" value="ECO:0007669"/>
    <property type="project" value="UniProtKB-UniRule"/>
</dbReference>
<dbReference type="GO" id="GO:0017108">
    <property type="term" value="F:5'-flap endonuclease activity"/>
    <property type="evidence" value="ECO:0007669"/>
    <property type="project" value="UniProtKB-UniRule"/>
</dbReference>
<dbReference type="GO" id="GO:0003677">
    <property type="term" value="F:DNA binding"/>
    <property type="evidence" value="ECO:0007669"/>
    <property type="project" value="UniProtKB-UniRule"/>
</dbReference>
<dbReference type="GO" id="GO:0000287">
    <property type="term" value="F:magnesium ion binding"/>
    <property type="evidence" value="ECO:0007669"/>
    <property type="project" value="UniProtKB-UniRule"/>
</dbReference>
<dbReference type="GO" id="GO:0006284">
    <property type="term" value="P:base-excision repair"/>
    <property type="evidence" value="ECO:0007669"/>
    <property type="project" value="UniProtKB-UniRule"/>
</dbReference>
<dbReference type="GO" id="GO:0043137">
    <property type="term" value="P:DNA replication, removal of RNA primer"/>
    <property type="evidence" value="ECO:0007669"/>
    <property type="project" value="UniProtKB-UniRule"/>
</dbReference>
<dbReference type="CDD" id="cd09907">
    <property type="entry name" value="H3TH_FEN1-Euk"/>
    <property type="match status" value="1"/>
</dbReference>
<dbReference type="CDD" id="cd09867">
    <property type="entry name" value="PIN_FEN1"/>
    <property type="match status" value="1"/>
</dbReference>
<dbReference type="FunFam" id="1.10.150.20:FF:000009">
    <property type="entry name" value="Flap endonuclease 1"/>
    <property type="match status" value="1"/>
</dbReference>
<dbReference type="FunFam" id="3.40.50.1010:FF:000003">
    <property type="entry name" value="Flap endonuclease 1"/>
    <property type="match status" value="1"/>
</dbReference>
<dbReference type="Gene3D" id="1.10.150.20">
    <property type="entry name" value="5' to 3' exonuclease, C-terminal subdomain"/>
    <property type="match status" value="1"/>
</dbReference>
<dbReference type="Gene3D" id="3.40.50.1010">
    <property type="entry name" value="5'-nuclease"/>
    <property type="match status" value="1"/>
</dbReference>
<dbReference type="HAMAP" id="MF_00614">
    <property type="entry name" value="Fen"/>
    <property type="match status" value="1"/>
</dbReference>
<dbReference type="InterPro" id="IPR036279">
    <property type="entry name" value="5-3_exonuclease_C_sf"/>
</dbReference>
<dbReference type="InterPro" id="IPR023426">
    <property type="entry name" value="Flap_endonuc"/>
</dbReference>
<dbReference type="InterPro" id="IPR008918">
    <property type="entry name" value="HhH2"/>
</dbReference>
<dbReference type="InterPro" id="IPR029060">
    <property type="entry name" value="PIN-like_dom_sf"/>
</dbReference>
<dbReference type="InterPro" id="IPR006086">
    <property type="entry name" value="XPG-I_dom"/>
</dbReference>
<dbReference type="InterPro" id="IPR006084">
    <property type="entry name" value="XPG/Rad2"/>
</dbReference>
<dbReference type="InterPro" id="IPR019974">
    <property type="entry name" value="XPG_CS"/>
</dbReference>
<dbReference type="InterPro" id="IPR006085">
    <property type="entry name" value="XPG_DNA_repair_N"/>
</dbReference>
<dbReference type="PANTHER" id="PTHR11081:SF9">
    <property type="entry name" value="FLAP ENDONUCLEASE 1"/>
    <property type="match status" value="1"/>
</dbReference>
<dbReference type="PANTHER" id="PTHR11081">
    <property type="entry name" value="FLAP ENDONUCLEASE FAMILY MEMBER"/>
    <property type="match status" value="1"/>
</dbReference>
<dbReference type="Pfam" id="PF00867">
    <property type="entry name" value="XPG_I"/>
    <property type="match status" value="1"/>
</dbReference>
<dbReference type="Pfam" id="PF00752">
    <property type="entry name" value="XPG_N"/>
    <property type="match status" value="1"/>
</dbReference>
<dbReference type="PRINTS" id="PR00853">
    <property type="entry name" value="XPGRADSUPER"/>
</dbReference>
<dbReference type="SMART" id="SM00279">
    <property type="entry name" value="HhH2"/>
    <property type="match status" value="1"/>
</dbReference>
<dbReference type="SMART" id="SM00484">
    <property type="entry name" value="XPGI"/>
    <property type="match status" value="1"/>
</dbReference>
<dbReference type="SMART" id="SM00485">
    <property type="entry name" value="XPGN"/>
    <property type="match status" value="1"/>
</dbReference>
<dbReference type="SUPFAM" id="SSF47807">
    <property type="entry name" value="5' to 3' exonuclease, C-terminal subdomain"/>
    <property type="match status" value="1"/>
</dbReference>
<dbReference type="SUPFAM" id="SSF88723">
    <property type="entry name" value="PIN domain-like"/>
    <property type="match status" value="1"/>
</dbReference>
<dbReference type="PROSITE" id="PS00841">
    <property type="entry name" value="XPG_1"/>
    <property type="match status" value="1"/>
</dbReference>
<dbReference type="PROSITE" id="PS00842">
    <property type="entry name" value="XPG_2"/>
    <property type="match status" value="1"/>
</dbReference>
<organism>
    <name type="scientific">Saccharomyces cerevisiae (strain YJM789)</name>
    <name type="common">Baker's yeast</name>
    <dbReference type="NCBI Taxonomy" id="307796"/>
    <lineage>
        <taxon>Eukaryota</taxon>
        <taxon>Fungi</taxon>
        <taxon>Dikarya</taxon>
        <taxon>Ascomycota</taxon>
        <taxon>Saccharomycotina</taxon>
        <taxon>Saccharomycetes</taxon>
        <taxon>Saccharomycetales</taxon>
        <taxon>Saccharomycetaceae</taxon>
        <taxon>Saccharomyces</taxon>
    </lineage>
</organism>
<protein>
    <recommendedName>
        <fullName evidence="1">Flap endonuclease 1</fullName>
        <shortName evidence="1">FEN-1</shortName>
        <ecNumber evidence="1">3.1.-.-</ecNumber>
    </recommendedName>
    <alternativeName>
        <fullName evidence="1">Flap structure-specific endonuclease 1</fullName>
    </alternativeName>
</protein>
<reference key="1">
    <citation type="journal article" date="2007" name="Proc. Natl. Acad. Sci. U.S.A.">
        <title>Genome sequencing and comparative analysis of Saccharomyces cerevisiae strain YJM789.</title>
        <authorList>
            <person name="Wei W."/>
            <person name="McCusker J.H."/>
            <person name="Hyman R.W."/>
            <person name="Jones T."/>
            <person name="Ning Y."/>
            <person name="Cao Z."/>
            <person name="Gu Z."/>
            <person name="Bruno D."/>
            <person name="Miranda M."/>
            <person name="Nguyen M."/>
            <person name="Wilhelmy J."/>
            <person name="Komp C."/>
            <person name="Tamse R."/>
            <person name="Wang X."/>
            <person name="Jia P."/>
            <person name="Luedi P."/>
            <person name="Oefner P.J."/>
            <person name="David L."/>
            <person name="Dietrich F.S."/>
            <person name="Li Y."/>
            <person name="Davis R.W."/>
            <person name="Steinmetz L.M."/>
        </authorList>
    </citation>
    <scope>NUCLEOTIDE SEQUENCE [LARGE SCALE GENOMIC DNA]</scope>
    <source>
        <strain>YJM789</strain>
    </source>
</reference>
<sequence>MGIKGLNAIISEHVPSAIRKSDIKSFFGRKVAIDASMSLYQFLIAVRQQDGGQLTNEAGETTSHLMGMFYRTLRMIDNGIKPCYVFDGKPPDLKSHELTKRSSRRVETEKKLAEATTELEKMKQERRLVKVSKEHNEEAQKLLGLMGIPYIIAPTEAEAQCAELAKKGKVYAAASEDMDTLCYRTPFLLRHLTFSEAKKEPIHEIDTELVLRGLDLTIEQFVDLCIMLGCDYCESIRGVGPVTALKLIKTHGSIEKIVEFIESGESNNTKWKIPEDWPYKQARMLFLDPEVIDGNEINLKWSPPKEKELIEYLCDDKKFSEERVKSGISRLKKGLKSGIQGRLDGFFQVVPKTKEQLAAAAKRAQENKKLNKNKNKVTKGRR</sequence>
<keyword id="KW-0227">DNA damage</keyword>
<keyword id="KW-0234">DNA repair</keyword>
<keyword id="KW-0235">DNA replication</keyword>
<keyword id="KW-0255">Endonuclease</keyword>
<keyword id="KW-0269">Exonuclease</keyword>
<keyword id="KW-0378">Hydrolase</keyword>
<keyword id="KW-0460">Magnesium</keyword>
<keyword id="KW-0479">Metal-binding</keyword>
<keyword id="KW-0496">Mitochondrion</keyword>
<keyword id="KW-0540">Nuclease</keyword>
<keyword id="KW-0539">Nucleus</keyword>
<keyword id="KW-0597">Phosphoprotein</keyword>
<accession>A6ZZK4</accession>
<gene>
    <name evidence="1" type="primary">RAD27</name>
    <name evidence="1" type="synonym">FEN1</name>
    <name type="ORF">SCY_3264</name>
</gene>
<name>FEN1_YEAS7</name>
<feature type="chain" id="PRO_0000403599" description="Flap endonuclease 1">
    <location>
        <begin position="1"/>
        <end position="382"/>
    </location>
</feature>
<feature type="region of interest" description="N-domain">
    <location>
        <begin position="1"/>
        <end position="105"/>
    </location>
</feature>
<feature type="region of interest" description="I-domain">
    <location>
        <begin position="120"/>
        <end position="251"/>
    </location>
</feature>
<feature type="region of interest" description="Interaction with PCNA" evidence="1">
    <location>
        <begin position="339"/>
        <end position="347"/>
    </location>
</feature>
<feature type="region of interest" description="Disordered" evidence="2">
    <location>
        <begin position="358"/>
        <end position="382"/>
    </location>
</feature>
<feature type="compositionally biased region" description="Basic residues" evidence="2">
    <location>
        <begin position="370"/>
        <end position="382"/>
    </location>
</feature>
<feature type="binding site" evidence="1">
    <location>
        <position position="34"/>
    </location>
    <ligand>
        <name>Mg(2+)</name>
        <dbReference type="ChEBI" id="CHEBI:18420"/>
        <label>1</label>
    </ligand>
</feature>
<feature type="binding site" evidence="1">
    <location>
        <position position="47"/>
    </location>
    <ligand>
        <name>DNA</name>
        <dbReference type="ChEBI" id="CHEBI:16991"/>
    </ligand>
</feature>
<feature type="binding site" evidence="1">
    <location>
        <position position="71"/>
    </location>
    <ligand>
        <name>DNA</name>
        <dbReference type="ChEBI" id="CHEBI:16991"/>
    </ligand>
</feature>
<feature type="binding site" evidence="1">
    <location>
        <position position="87"/>
    </location>
    <ligand>
        <name>Mg(2+)</name>
        <dbReference type="ChEBI" id="CHEBI:18420"/>
        <label>1</label>
    </ligand>
</feature>
<feature type="binding site" evidence="1">
    <location>
        <position position="156"/>
    </location>
    <ligand>
        <name>DNA</name>
        <dbReference type="ChEBI" id="CHEBI:16991"/>
    </ligand>
</feature>
<feature type="binding site" evidence="1">
    <location>
        <position position="156"/>
    </location>
    <ligand>
        <name>Mg(2+)</name>
        <dbReference type="ChEBI" id="CHEBI:18420"/>
        <label>1</label>
    </ligand>
</feature>
<feature type="binding site" evidence="1">
    <location>
        <position position="158"/>
    </location>
    <ligand>
        <name>Mg(2+)</name>
        <dbReference type="ChEBI" id="CHEBI:18420"/>
        <label>1</label>
    </ligand>
</feature>
<feature type="binding site" evidence="1">
    <location>
        <position position="177"/>
    </location>
    <ligand>
        <name>Mg(2+)</name>
        <dbReference type="ChEBI" id="CHEBI:18420"/>
        <label>2</label>
    </ligand>
</feature>
<feature type="binding site" evidence="1">
    <location>
        <position position="179"/>
    </location>
    <ligand>
        <name>Mg(2+)</name>
        <dbReference type="ChEBI" id="CHEBI:18420"/>
        <label>2</label>
    </ligand>
</feature>
<feature type="binding site" evidence="1">
    <location>
        <position position="229"/>
    </location>
    <ligand>
        <name>DNA</name>
        <dbReference type="ChEBI" id="CHEBI:16991"/>
    </ligand>
</feature>
<feature type="binding site" evidence="1">
    <location>
        <position position="231"/>
    </location>
    <ligand>
        <name>DNA</name>
        <dbReference type="ChEBI" id="CHEBI:16991"/>
    </ligand>
</feature>
<feature type="binding site" evidence="1">
    <location>
        <position position="231"/>
    </location>
    <ligand>
        <name>Mg(2+)</name>
        <dbReference type="ChEBI" id="CHEBI:18420"/>
        <label>2</label>
    </ligand>
</feature>
<evidence type="ECO:0000255" key="1">
    <source>
        <dbReference type="HAMAP-Rule" id="MF_03140"/>
    </source>
</evidence>
<evidence type="ECO:0000256" key="2">
    <source>
        <dbReference type="SAM" id="MobiDB-lite"/>
    </source>
</evidence>
<proteinExistence type="inferred from homology"/>
<comment type="function">
    <text evidence="1">Structure-specific nuclease with 5'-flap endonuclease and 5'-3' exonuclease activities involved in DNA replication and repair. During DNA replication, cleaves the 5'-overhanging flap structure that is generated by displacement synthesis when DNA polymerase encounters the 5'-end of a downstream Okazaki fragment. It enters the flap from the 5'-end and then tracks to cleave the flap base, leaving a nick for ligation. Also involved in the long patch base excision repair (LP-BER) pathway, by cleaving within the apurinic/apyrimidinic (AP) site-terminated flap. Acts as a genome stabilization factor that prevents flaps from equilibrating into structures that lead to duplications and deletions. Also possesses 5'-3' exonuclease activity on nicked or gapped double-stranded DNA, and exhibits RNase H activity. Also involved in replication and repair of rDNA and in repairing mitochondrial DNA.</text>
</comment>
<comment type="cofactor">
    <cofactor evidence="1">
        <name>Mg(2+)</name>
        <dbReference type="ChEBI" id="CHEBI:18420"/>
    </cofactor>
    <text evidence="1">Binds 2 magnesium ions per subunit. They probably participate in the reaction catalyzed by the enzyme. May bind an additional third magnesium ion after substrate binding.</text>
</comment>
<comment type="subunit">
    <text evidence="1">Interacts with PCNA. Three molecules of RAD27 bind to one PCNA trimer with each molecule binding to one PCNA monomer. PCNA stimulates the nuclease activity without altering cleavage specificity.</text>
</comment>
<comment type="subcellular location">
    <subcellularLocation>
        <location evidence="1">Nucleus</location>
        <location evidence="1">Nucleolus</location>
    </subcellularLocation>
    <subcellularLocation>
        <location evidence="1">Nucleus</location>
        <location evidence="1">Nucleoplasm</location>
    </subcellularLocation>
    <subcellularLocation>
        <location evidence="1">Mitochondrion</location>
    </subcellularLocation>
    <text evidence="1">Resides mostly in the nucleoli and relocalizes to the nucleoplasm upon DNA damage.</text>
</comment>
<comment type="PTM">
    <text evidence="1">Phosphorylated. Phosphorylation upon DNA damage induces relocalization to the nuclear plasma.</text>
</comment>
<comment type="similarity">
    <text evidence="1">Belongs to the XPG/RAD2 endonuclease family. FEN1 subfamily.</text>
</comment>